<keyword id="KW-0175">Coiled coil</keyword>
<keyword id="KW-0963">Cytoplasm</keyword>
<keyword id="KW-0227">DNA damage</keyword>
<keyword id="KW-0391">Immunity</keyword>
<keyword id="KW-1017">Isopeptide bond</keyword>
<keyword id="KW-0551">Lipid droplet</keyword>
<keyword id="KW-0479">Metal-binding</keyword>
<keyword id="KW-0539">Nucleus</keyword>
<keyword id="KW-0987">Osteopetrosis</keyword>
<keyword id="KW-1185">Reference proteome</keyword>
<keyword id="KW-0677">Repeat</keyword>
<keyword id="KW-0808">Transferase</keyword>
<keyword id="KW-0832">Ubl conjugation</keyword>
<keyword id="KW-0833">Ubl conjugation pathway</keyword>
<keyword id="KW-0862">Zinc</keyword>
<keyword id="KW-0863">Zinc-finger</keyword>
<sequence>MSLLNCENSCGSSQSESDCCVAMASSCSAATKDDSVGGTASTGNLSSSFMEDIQGYDVEFDPPLESKYECPICLMALREAVQTPCGHRFCKACIIKSIRDAGHKCPVDNEILLENQLFPDNFAKREILSLMVKCPNEGCLHKMELRHLEDHQAHCEFALVDCPQCQRPFQKFHINIHILKDCPRRQVSCDNCAALVAFEDKEIHDQNCPLANVICEYCNTILIREQMPNHYDLDCPTAPIPCTFSTFGCHEKMQRNHLARHLQENTQSHMRMLAQAVHSLSLIPDSGYVSEVRNFQETIHQLEGRLVRQDHQIRELTAKMETQSTYVSELKRTIRTLEDKVAEIEAQQCNGIYIWKIGNFGMHLKCQEEEKPVVIHSPGFYTGKPGYKLCMRLHLQLPTAQRCANYISLFVHTMQGEYDSHLPWPFQGTIRLTILDQSEAPVRQNHEEIMDAKPDLLAFQRPTIPRNPKGFGYVTFMHLEALRQRTFIKDDTLLVRCEVSTRFDMGSLRREGFQPRSTDSGV</sequence>
<protein>
    <recommendedName>
        <fullName>TNF receptor-associated factor 6</fullName>
        <ecNumber evidence="3">2.3.2.27</ecNumber>
    </recommendedName>
    <alternativeName>
        <fullName>E3 ubiquitin-protein ligase TRAF6</fullName>
    </alternativeName>
    <alternativeName>
        <fullName evidence="8">RING-type E3 ubiquitin transferase TRAF6</fullName>
    </alternativeName>
</protein>
<dbReference type="EC" id="2.3.2.27" evidence="3"/>
<dbReference type="EMBL" id="EU204929">
    <property type="protein sequence ID" value="ABY64983.1"/>
    <property type="molecule type" value="mRNA"/>
</dbReference>
<dbReference type="RefSeq" id="NP_001129268.1">
    <property type="nucleotide sequence ID" value="NM_001135796.1"/>
</dbReference>
<dbReference type="BMRB" id="B6CJY5"/>
<dbReference type="SMR" id="B6CJY5"/>
<dbReference type="FunCoup" id="B6CJY5">
    <property type="interactions" value="3142"/>
</dbReference>
<dbReference type="STRING" id="9544.ENSMMUP00000024012"/>
<dbReference type="PaxDb" id="9544-ENSMMUP00000021907"/>
<dbReference type="Ensembl" id="ENSMMUT00000025667.4">
    <property type="protein sequence ID" value="ENSMMUP00000024012.3"/>
    <property type="gene ID" value="ENSMMUG00000018266.4"/>
</dbReference>
<dbReference type="GeneID" id="716907"/>
<dbReference type="KEGG" id="mcc:716907"/>
<dbReference type="CTD" id="7189"/>
<dbReference type="VEuPathDB" id="HostDB:ENSMMUG00000018266"/>
<dbReference type="VGNC" id="VGNC:101417">
    <property type="gene designation" value="TRAF6"/>
</dbReference>
<dbReference type="eggNOG" id="KOG0297">
    <property type="taxonomic scope" value="Eukaryota"/>
</dbReference>
<dbReference type="GeneTree" id="ENSGT00940000155426"/>
<dbReference type="InParanoid" id="B6CJY5"/>
<dbReference type="OMA" id="FMHLQAL"/>
<dbReference type="OrthoDB" id="6475149at2759"/>
<dbReference type="UniPathway" id="UPA00143"/>
<dbReference type="Proteomes" id="UP000006718">
    <property type="component" value="Chromosome 14"/>
</dbReference>
<dbReference type="Bgee" id="ENSMMUG00000018266">
    <property type="expression patterns" value="Expressed in skeletal muscle tissue and 23 other cell types or tissues"/>
</dbReference>
<dbReference type="ExpressionAtlas" id="B6CJY5">
    <property type="expression patterns" value="baseline"/>
</dbReference>
<dbReference type="GO" id="GO:0035631">
    <property type="term" value="C:CD40 receptor complex"/>
    <property type="evidence" value="ECO:0007669"/>
    <property type="project" value="Ensembl"/>
</dbReference>
<dbReference type="GO" id="GO:0005938">
    <property type="term" value="C:cell cortex"/>
    <property type="evidence" value="ECO:0007669"/>
    <property type="project" value="UniProtKB-SubCell"/>
</dbReference>
<dbReference type="GO" id="GO:0005737">
    <property type="term" value="C:cytoplasm"/>
    <property type="evidence" value="ECO:0000318"/>
    <property type="project" value="GO_Central"/>
</dbReference>
<dbReference type="GO" id="GO:0009898">
    <property type="term" value="C:cytoplasmic side of plasma membrane"/>
    <property type="evidence" value="ECO:0000318"/>
    <property type="project" value="GO_Central"/>
</dbReference>
<dbReference type="GO" id="GO:0005829">
    <property type="term" value="C:cytosol"/>
    <property type="evidence" value="ECO:0007669"/>
    <property type="project" value="Ensembl"/>
</dbReference>
<dbReference type="GO" id="GO:0098978">
    <property type="term" value="C:glutamatergic synapse"/>
    <property type="evidence" value="ECO:0000318"/>
    <property type="project" value="GO_Central"/>
</dbReference>
<dbReference type="GO" id="GO:0005811">
    <property type="term" value="C:lipid droplet"/>
    <property type="evidence" value="ECO:0000250"/>
    <property type="project" value="UniProtKB"/>
</dbReference>
<dbReference type="GO" id="GO:0005634">
    <property type="term" value="C:nucleus"/>
    <property type="evidence" value="ECO:0007669"/>
    <property type="project" value="UniProtKB-SubCell"/>
</dbReference>
<dbReference type="GO" id="GO:0048471">
    <property type="term" value="C:perinuclear region of cytoplasm"/>
    <property type="evidence" value="ECO:0007669"/>
    <property type="project" value="Ensembl"/>
</dbReference>
<dbReference type="GO" id="GO:0042826">
    <property type="term" value="F:histone deacetylase binding"/>
    <property type="evidence" value="ECO:0007669"/>
    <property type="project" value="Ensembl"/>
</dbReference>
<dbReference type="GO" id="GO:0042802">
    <property type="term" value="F:identical protein binding"/>
    <property type="evidence" value="ECO:0007669"/>
    <property type="project" value="Ensembl"/>
</dbReference>
<dbReference type="GO" id="GO:0043422">
    <property type="term" value="F:protein kinase B binding"/>
    <property type="evidence" value="ECO:0007669"/>
    <property type="project" value="Ensembl"/>
</dbReference>
<dbReference type="GO" id="GO:0035591">
    <property type="term" value="F:signaling adaptor activity"/>
    <property type="evidence" value="ECO:0000318"/>
    <property type="project" value="GO_Central"/>
</dbReference>
<dbReference type="GO" id="GO:0005164">
    <property type="term" value="F:tumor necrosis factor receptor binding"/>
    <property type="evidence" value="ECO:0007669"/>
    <property type="project" value="InterPro"/>
</dbReference>
<dbReference type="GO" id="GO:0031624">
    <property type="term" value="F:ubiquitin conjugating enzyme binding"/>
    <property type="evidence" value="ECO:0007669"/>
    <property type="project" value="Ensembl"/>
</dbReference>
<dbReference type="GO" id="GO:0061630">
    <property type="term" value="F:ubiquitin protein ligase activity"/>
    <property type="evidence" value="ECO:0000318"/>
    <property type="project" value="GO_Central"/>
</dbReference>
<dbReference type="GO" id="GO:0004842">
    <property type="term" value="F:ubiquitin-protein transferase activity"/>
    <property type="evidence" value="ECO:0000250"/>
    <property type="project" value="UniProtKB"/>
</dbReference>
<dbReference type="GO" id="GO:0034450">
    <property type="term" value="F:ubiquitin-ubiquitin ligase activity"/>
    <property type="evidence" value="ECO:0007669"/>
    <property type="project" value="Ensembl"/>
</dbReference>
<dbReference type="GO" id="GO:0008270">
    <property type="term" value="F:zinc ion binding"/>
    <property type="evidence" value="ECO:0007669"/>
    <property type="project" value="UniProtKB-KW"/>
</dbReference>
<dbReference type="GO" id="GO:0019886">
    <property type="term" value="P:antigen processing and presentation of exogenous peptide antigen via MHC class II"/>
    <property type="evidence" value="ECO:0007669"/>
    <property type="project" value="Ensembl"/>
</dbReference>
<dbReference type="GO" id="GO:0140374">
    <property type="term" value="P:antiviral innate immune response"/>
    <property type="evidence" value="ECO:0007669"/>
    <property type="project" value="Ensembl"/>
</dbReference>
<dbReference type="GO" id="GO:0000045">
    <property type="term" value="P:autophagosome assembly"/>
    <property type="evidence" value="ECO:0007669"/>
    <property type="project" value="Ensembl"/>
</dbReference>
<dbReference type="GO" id="GO:0045453">
    <property type="term" value="P:bone resorption"/>
    <property type="evidence" value="ECO:0007669"/>
    <property type="project" value="Ensembl"/>
</dbReference>
<dbReference type="GO" id="GO:0007249">
    <property type="term" value="P:canonical NF-kappaB signal transduction"/>
    <property type="evidence" value="ECO:0007669"/>
    <property type="project" value="Ensembl"/>
</dbReference>
<dbReference type="GO" id="GO:0023035">
    <property type="term" value="P:CD40 signaling pathway"/>
    <property type="evidence" value="ECO:0007669"/>
    <property type="project" value="Ensembl"/>
</dbReference>
<dbReference type="GO" id="GO:0002753">
    <property type="term" value="P:cytoplasmic pattern recognition receptor signaling pathway"/>
    <property type="evidence" value="ECO:0007669"/>
    <property type="project" value="Ensembl"/>
</dbReference>
<dbReference type="GO" id="GO:0006974">
    <property type="term" value="P:DNA damage response"/>
    <property type="evidence" value="ECO:0007669"/>
    <property type="project" value="UniProtKB-KW"/>
</dbReference>
<dbReference type="GO" id="GO:0001701">
    <property type="term" value="P:in utero embryonic development"/>
    <property type="evidence" value="ECO:0007669"/>
    <property type="project" value="Ensembl"/>
</dbReference>
<dbReference type="GO" id="GO:0045087">
    <property type="term" value="P:innate immune response"/>
    <property type="evidence" value="ECO:0000318"/>
    <property type="project" value="GO_Central"/>
</dbReference>
<dbReference type="GO" id="GO:0070498">
    <property type="term" value="P:interleukin-1-mediated signaling pathway"/>
    <property type="evidence" value="ECO:0007669"/>
    <property type="project" value="Ensembl"/>
</dbReference>
<dbReference type="GO" id="GO:0097400">
    <property type="term" value="P:interleukin-17-mediated signaling pathway"/>
    <property type="evidence" value="ECO:0007669"/>
    <property type="project" value="Ensembl"/>
</dbReference>
<dbReference type="GO" id="GO:0038173">
    <property type="term" value="P:interleukin-17A-mediated signaling pathway"/>
    <property type="evidence" value="ECO:0007669"/>
    <property type="project" value="Ensembl"/>
</dbReference>
<dbReference type="GO" id="GO:0038172">
    <property type="term" value="P:interleukin-33-mediated signaling pathway"/>
    <property type="evidence" value="ECO:0007669"/>
    <property type="project" value="Ensembl"/>
</dbReference>
<dbReference type="GO" id="GO:0031663">
    <property type="term" value="P:lipopolysaccharide-mediated signaling pathway"/>
    <property type="evidence" value="ECO:0000318"/>
    <property type="project" value="GO_Central"/>
</dbReference>
<dbReference type="GO" id="GO:0043011">
    <property type="term" value="P:myeloid dendritic cell differentiation"/>
    <property type="evidence" value="ECO:0007669"/>
    <property type="project" value="Ensembl"/>
</dbReference>
<dbReference type="GO" id="GO:0000122">
    <property type="term" value="P:negative regulation of transcription by RNA polymerase II"/>
    <property type="evidence" value="ECO:0007669"/>
    <property type="project" value="Ensembl"/>
</dbReference>
<dbReference type="GO" id="GO:0001843">
    <property type="term" value="P:neural tube closure"/>
    <property type="evidence" value="ECO:0007669"/>
    <property type="project" value="Ensembl"/>
</dbReference>
<dbReference type="GO" id="GO:0038061">
    <property type="term" value="P:non-canonical NF-kappaB signal transduction"/>
    <property type="evidence" value="ECO:0007669"/>
    <property type="project" value="Ensembl"/>
</dbReference>
<dbReference type="GO" id="GO:0042475">
    <property type="term" value="P:odontogenesis of dentin-containing tooth"/>
    <property type="evidence" value="ECO:0007669"/>
    <property type="project" value="Ensembl"/>
</dbReference>
<dbReference type="GO" id="GO:0001503">
    <property type="term" value="P:ossification"/>
    <property type="evidence" value="ECO:0007669"/>
    <property type="project" value="Ensembl"/>
</dbReference>
<dbReference type="GO" id="GO:0030316">
    <property type="term" value="P:osteoclast differentiation"/>
    <property type="evidence" value="ECO:0007669"/>
    <property type="project" value="Ensembl"/>
</dbReference>
<dbReference type="GO" id="GO:0043123">
    <property type="term" value="P:positive regulation of canonical NF-kappaB signal transduction"/>
    <property type="evidence" value="ECO:0000250"/>
    <property type="project" value="UniProtKB"/>
</dbReference>
<dbReference type="GO" id="GO:0032735">
    <property type="term" value="P:positive regulation of interleukin-12 production"/>
    <property type="evidence" value="ECO:0007669"/>
    <property type="project" value="Ensembl"/>
</dbReference>
<dbReference type="GO" id="GO:0032743">
    <property type="term" value="P:positive regulation of interleukin-2 production"/>
    <property type="evidence" value="ECO:0007669"/>
    <property type="project" value="Ensembl"/>
</dbReference>
<dbReference type="GO" id="GO:0032755">
    <property type="term" value="P:positive regulation of interleukin-6 production"/>
    <property type="evidence" value="ECO:0007669"/>
    <property type="project" value="Ensembl"/>
</dbReference>
<dbReference type="GO" id="GO:0046330">
    <property type="term" value="P:positive regulation of JNK cascade"/>
    <property type="evidence" value="ECO:0007669"/>
    <property type="project" value="Ensembl"/>
</dbReference>
<dbReference type="GO" id="GO:1904996">
    <property type="term" value="P:positive regulation of leukocyte adhesion to vascular endothelial cell"/>
    <property type="evidence" value="ECO:0007669"/>
    <property type="project" value="Ensembl"/>
</dbReference>
<dbReference type="GO" id="GO:0031666">
    <property type="term" value="P:positive regulation of lipopolysaccharide-mediated signaling pathway"/>
    <property type="evidence" value="ECO:0007669"/>
    <property type="project" value="Ensembl"/>
</dbReference>
<dbReference type="GO" id="GO:0051092">
    <property type="term" value="P:positive regulation of NF-kappaB transcription factor activity"/>
    <property type="evidence" value="ECO:0000250"/>
    <property type="project" value="UniProtKB"/>
</dbReference>
<dbReference type="GO" id="GO:0045672">
    <property type="term" value="P:positive regulation of osteoclast differentiation"/>
    <property type="evidence" value="ECO:0007669"/>
    <property type="project" value="Ensembl"/>
</dbReference>
<dbReference type="GO" id="GO:0002726">
    <property type="term" value="P:positive regulation of T cell cytokine production"/>
    <property type="evidence" value="ECO:0007669"/>
    <property type="project" value="Ensembl"/>
</dbReference>
<dbReference type="GO" id="GO:0042102">
    <property type="term" value="P:positive regulation of T cell proliferation"/>
    <property type="evidence" value="ECO:0007669"/>
    <property type="project" value="Ensembl"/>
</dbReference>
<dbReference type="GO" id="GO:0045944">
    <property type="term" value="P:positive regulation of transcription by RNA polymerase II"/>
    <property type="evidence" value="ECO:0007669"/>
    <property type="project" value="Ensembl"/>
</dbReference>
<dbReference type="GO" id="GO:0032481">
    <property type="term" value="P:positive regulation of type I interferon production"/>
    <property type="evidence" value="ECO:0007669"/>
    <property type="project" value="Ensembl"/>
</dbReference>
<dbReference type="GO" id="GO:0051865">
    <property type="term" value="P:protein autoubiquitination"/>
    <property type="evidence" value="ECO:0007669"/>
    <property type="project" value="Ensembl"/>
</dbReference>
<dbReference type="GO" id="GO:0141198">
    <property type="term" value="P:protein branched polyubiquitination"/>
    <property type="evidence" value="ECO:0000250"/>
    <property type="project" value="UniProtKB"/>
</dbReference>
<dbReference type="GO" id="GO:0070534">
    <property type="term" value="P:protein K63-linked ubiquitination"/>
    <property type="evidence" value="ECO:0000250"/>
    <property type="project" value="UniProtKB"/>
</dbReference>
<dbReference type="GO" id="GO:0042981">
    <property type="term" value="P:regulation of apoptotic process"/>
    <property type="evidence" value="ECO:0007669"/>
    <property type="project" value="InterPro"/>
</dbReference>
<dbReference type="GO" id="GO:0043122">
    <property type="term" value="P:regulation of canonical NF-kappaB signal transduction"/>
    <property type="evidence" value="ECO:0000318"/>
    <property type="project" value="GO_Central"/>
</dbReference>
<dbReference type="GO" id="GO:0002637">
    <property type="term" value="P:regulation of immunoglobulin production"/>
    <property type="evidence" value="ECO:0007669"/>
    <property type="project" value="Ensembl"/>
</dbReference>
<dbReference type="GO" id="GO:0098696">
    <property type="term" value="P:regulation of neurotransmitter receptor localization to postsynaptic specialization membrane"/>
    <property type="evidence" value="ECO:0007669"/>
    <property type="project" value="Ensembl"/>
</dbReference>
<dbReference type="GO" id="GO:0050852">
    <property type="term" value="P:T cell receptor signaling pathway"/>
    <property type="evidence" value="ECO:0007669"/>
    <property type="project" value="Ensembl"/>
</dbReference>
<dbReference type="GO" id="GO:0042088">
    <property type="term" value="P:T-helper 1 type immune response"/>
    <property type="evidence" value="ECO:0007669"/>
    <property type="project" value="Ensembl"/>
</dbReference>
<dbReference type="GO" id="GO:0034142">
    <property type="term" value="P:toll-like receptor 4 signaling pathway"/>
    <property type="evidence" value="ECO:0007669"/>
    <property type="project" value="Ensembl"/>
</dbReference>
<dbReference type="GO" id="GO:0033209">
    <property type="term" value="P:tumor necrosis factor-mediated signaling pathway"/>
    <property type="evidence" value="ECO:0007669"/>
    <property type="project" value="Ensembl"/>
</dbReference>
<dbReference type="CDD" id="cd03776">
    <property type="entry name" value="MATH_TRAF6"/>
    <property type="match status" value="1"/>
</dbReference>
<dbReference type="CDD" id="cd16643">
    <property type="entry name" value="mRING-HC-C3HC3D_TRAF6"/>
    <property type="match status" value="1"/>
</dbReference>
<dbReference type="FunFam" id="2.60.210.10:FF:000010">
    <property type="entry name" value="TNF receptor-associated factor"/>
    <property type="match status" value="1"/>
</dbReference>
<dbReference type="FunFam" id="3.30.40.10:FF:000179">
    <property type="entry name" value="TNF receptor-associated factor"/>
    <property type="match status" value="1"/>
</dbReference>
<dbReference type="FunFam" id="3.30.40.10:FF:000211">
    <property type="entry name" value="TNF receptor-associated factor"/>
    <property type="match status" value="1"/>
</dbReference>
<dbReference type="FunFam" id="3.30.40.10:FF:000289">
    <property type="entry name" value="TNF receptor-associated factor"/>
    <property type="match status" value="1"/>
</dbReference>
<dbReference type="Gene3D" id="2.60.210.10">
    <property type="entry name" value="Apoptosis, Tumor Necrosis Factor Receptor Associated Protein 2, Chain A"/>
    <property type="match status" value="1"/>
</dbReference>
<dbReference type="Gene3D" id="3.30.40.10">
    <property type="entry name" value="Zinc/RING finger domain, C3HC4 (zinc finger)"/>
    <property type="match status" value="3"/>
</dbReference>
<dbReference type="InterPro" id="IPR002083">
    <property type="entry name" value="MATH/TRAF_dom"/>
</dbReference>
<dbReference type="InterPro" id="IPR012227">
    <property type="entry name" value="TNF_rcpt-assoc_TRAF_met"/>
</dbReference>
<dbReference type="InterPro" id="IPR008974">
    <property type="entry name" value="TRAF-like"/>
</dbReference>
<dbReference type="InterPro" id="IPR049342">
    <property type="entry name" value="TRAF1-6_MATH_dom"/>
</dbReference>
<dbReference type="InterPro" id="IPR037309">
    <property type="entry name" value="TRAF6_MATH"/>
</dbReference>
<dbReference type="InterPro" id="IPR027139">
    <property type="entry name" value="TRAF6_RING-HC"/>
</dbReference>
<dbReference type="InterPro" id="IPR041310">
    <property type="entry name" value="TRAF6_Z2"/>
</dbReference>
<dbReference type="InterPro" id="IPR001841">
    <property type="entry name" value="Znf_RING"/>
</dbReference>
<dbReference type="InterPro" id="IPR013083">
    <property type="entry name" value="Znf_RING/FYVE/PHD"/>
</dbReference>
<dbReference type="InterPro" id="IPR017907">
    <property type="entry name" value="Znf_RING_CS"/>
</dbReference>
<dbReference type="InterPro" id="IPR001293">
    <property type="entry name" value="Znf_TRAF"/>
</dbReference>
<dbReference type="PANTHER" id="PTHR10131">
    <property type="entry name" value="TNF RECEPTOR ASSOCIATED FACTOR"/>
    <property type="match status" value="1"/>
</dbReference>
<dbReference type="PANTHER" id="PTHR10131:SF152">
    <property type="entry name" value="TNF RECEPTOR-ASSOCIATED FACTOR 6"/>
    <property type="match status" value="1"/>
</dbReference>
<dbReference type="Pfam" id="PF21355">
    <property type="entry name" value="TRAF-mep_MATH"/>
    <property type="match status" value="1"/>
</dbReference>
<dbReference type="Pfam" id="PF18048">
    <property type="entry name" value="TRAF6_Z2"/>
    <property type="match status" value="1"/>
</dbReference>
<dbReference type="Pfam" id="PF13923">
    <property type="entry name" value="zf-C3HC4_2"/>
    <property type="match status" value="1"/>
</dbReference>
<dbReference type="Pfam" id="PF02176">
    <property type="entry name" value="zf-TRAF"/>
    <property type="match status" value="1"/>
</dbReference>
<dbReference type="PIRSF" id="PIRSF015614">
    <property type="entry name" value="TRAF"/>
    <property type="match status" value="1"/>
</dbReference>
<dbReference type="SMART" id="SM00061">
    <property type="entry name" value="MATH"/>
    <property type="match status" value="1"/>
</dbReference>
<dbReference type="SMART" id="SM00184">
    <property type="entry name" value="RING"/>
    <property type="match status" value="1"/>
</dbReference>
<dbReference type="SUPFAM" id="SSF57850">
    <property type="entry name" value="RING/U-box"/>
    <property type="match status" value="1"/>
</dbReference>
<dbReference type="SUPFAM" id="SSF49599">
    <property type="entry name" value="TRAF domain-like"/>
    <property type="match status" value="3"/>
</dbReference>
<dbReference type="PROSITE" id="PS50144">
    <property type="entry name" value="MATH"/>
    <property type="match status" value="1"/>
</dbReference>
<dbReference type="PROSITE" id="PS00518">
    <property type="entry name" value="ZF_RING_1"/>
    <property type="match status" value="1"/>
</dbReference>
<dbReference type="PROSITE" id="PS50089">
    <property type="entry name" value="ZF_RING_2"/>
    <property type="match status" value="1"/>
</dbReference>
<dbReference type="PROSITE" id="PS50145">
    <property type="entry name" value="ZF_TRAF"/>
    <property type="match status" value="2"/>
</dbReference>
<reference key="1">
    <citation type="journal article" date="2008" name="Nat. Med.">
        <title>Divergent TLR7 and TLR9 signaling and type I interferon production distinguish pathogenic and nonpathogenic AIDS virus infections.</title>
        <authorList>
            <person name="Mandl J.N."/>
            <person name="Barry A.P."/>
            <person name="Vanderford T.H."/>
            <person name="Kozyr N."/>
            <person name="Chavan R."/>
            <person name="Klucking S."/>
            <person name="Barrat F.J."/>
            <person name="Coffman R.L."/>
            <person name="Staprans S.I."/>
            <person name="Feinberg M.B."/>
        </authorList>
    </citation>
    <scope>NUCLEOTIDE SEQUENCE [MRNA]</scope>
</reference>
<gene>
    <name type="primary">TRAF6</name>
</gene>
<proteinExistence type="evidence at transcript level"/>
<accession>B6CJY5</accession>
<name>TRAF6_MACMU</name>
<organism>
    <name type="scientific">Macaca mulatta</name>
    <name type="common">Rhesus macaque</name>
    <dbReference type="NCBI Taxonomy" id="9544"/>
    <lineage>
        <taxon>Eukaryota</taxon>
        <taxon>Metazoa</taxon>
        <taxon>Chordata</taxon>
        <taxon>Craniata</taxon>
        <taxon>Vertebrata</taxon>
        <taxon>Euteleostomi</taxon>
        <taxon>Mammalia</taxon>
        <taxon>Eutheria</taxon>
        <taxon>Euarchontoglires</taxon>
        <taxon>Primates</taxon>
        <taxon>Haplorrhini</taxon>
        <taxon>Catarrhini</taxon>
        <taxon>Cercopithecidae</taxon>
        <taxon>Cercopithecinae</taxon>
        <taxon>Macaca</taxon>
    </lineage>
</organism>
<feature type="chain" id="PRO_0000391609" description="TNF receptor-associated factor 6">
    <location>
        <begin position="1"/>
        <end position="522"/>
    </location>
</feature>
<feature type="domain" description="MATH" evidence="5">
    <location>
        <begin position="350"/>
        <end position="499"/>
    </location>
</feature>
<feature type="zinc finger region" description="RING-type; degenerate" evidence="6">
    <location>
        <begin position="70"/>
        <end position="109"/>
    </location>
</feature>
<feature type="zinc finger region" description="TRAF-type 1" evidence="7">
    <location>
        <begin position="150"/>
        <end position="202"/>
    </location>
</feature>
<feature type="zinc finger region" description="TRAF-type 2" evidence="7">
    <location>
        <begin position="203"/>
        <end position="259"/>
    </location>
</feature>
<feature type="region of interest" description="Interaction with TAX1BP1" evidence="1">
    <location>
        <begin position="1"/>
        <end position="354"/>
    </location>
</feature>
<feature type="region of interest" description="Interaction with TANK" evidence="3">
    <location>
        <begin position="355"/>
        <end position="522"/>
    </location>
</feature>
<feature type="coiled-coil region" evidence="4">
    <location>
        <begin position="288"/>
        <end position="348"/>
    </location>
</feature>
<feature type="cross-link" description="Glycyl lysine isopeptide (Lys-Gly) (interchain with G-Cter in SUMO); alternate" evidence="1">
    <location>
        <position position="124"/>
    </location>
</feature>
<feature type="cross-link" description="Glycyl lysine isopeptide (Lys-Gly) (interchain with G-Cter in ubiquitin); alternate" evidence="3">
    <location>
        <position position="124"/>
    </location>
</feature>
<feature type="cross-link" description="Glycyl lysine isopeptide (Lys-Gly) (interchain with G-Cter in SUMO)" evidence="1">
    <location>
        <position position="142"/>
    </location>
</feature>
<feature type="cross-link" description="Glycyl lysine isopeptide (Lys-Gly) (interchain with G-Cter in ubiquitin)" evidence="2">
    <location>
        <position position="319"/>
    </location>
</feature>
<feature type="cross-link" description="Glycyl lysine isopeptide (Lys-Gly) (interchain with G-Cter in SUMO)" evidence="1">
    <location>
        <position position="453"/>
    </location>
</feature>
<comment type="function">
    <text evidence="2 3">E3 ubiquitin ligase that, together with UBE2N and UBE2V1, mediates the synthesis of 'Lys-63'-linked-polyubiquitin chains conjugated to proteins, such as ECSIT, IKBKG, IRAK1, AKT1 and AKT2. Also mediates ubiquitination of free/unanchored polyubiquitin chain that leads to MAP3K7 activation. Leads to the activation of NF-kappa-B and JUN (By similarity). Seems to also play a role in dendritic cells (DCs) maturation and/or activation (By similarity). Represses c-Myb-mediated transactivation, in B-lymphocytes. Adapter protein that seems to play a role in signal transduction initiated via TNF receptor, IL-1 receptor and IL-17 receptor (By similarity). Regulates osteoclast differentiation by mediating the activation of adapter protein complex 1 (AP-1) and NF-kappa-B, in response to RANK-L stimulation (By similarity). Together with MAP3K8, mediates CD40 signals that activate ERK in B-cells and macrophages, and thus may play a role in the regulation of immunoglobulin production (By similarity). Acts as a regulator of the JNK and NF-kappa-B signaling pathways by initiating assembly of heterotypic 'Lys-63'-/'Lys-48'-linked branched ubiquitin chains that are then recognized by TAB2: TRAF6 catalyzes initial 'Lys-63'-linked-polyubiquitin chains that are then branched via 'Lys-48'-linked polyubiquitin by HUWE1. 'Lys-63'-/'Lys-48'-linked branched ubiquitin chains protect 'Lys-63'-linkages from CYLD deubiquitination. Also participates in the TCR signaling by ubiquitinating LAT (By similarity).</text>
</comment>
<comment type="catalytic activity">
    <reaction evidence="3">
        <text>S-ubiquitinyl-[E2 ubiquitin-conjugating enzyme]-L-cysteine + [acceptor protein]-L-lysine = [E2 ubiquitin-conjugating enzyme]-L-cysteine + N(6)-ubiquitinyl-[acceptor protein]-L-lysine.</text>
        <dbReference type="EC" id="2.3.2.27"/>
    </reaction>
</comment>
<comment type="pathway">
    <text evidence="3">Protein modification; protein ubiquitination.</text>
</comment>
<comment type="subunit">
    <text evidence="2 3">Homotrimer. Homooligomer. N-terminal region is dimeric while C-terminal region is trimeric; maybe providing a mode of oligomerization. Upon IL1B treatment, forms a complex with PELI1, IRAK1, IRAK4 and MYD88; this complex recruits MAP3K7/TAK1, TAB1 and TAB2 to mediate NF-kappa-B activation. Direct binding of SMAD6 to PELI1 prevents the complex formation and hence negatively regulates IL1R-TLR signaling and eventually NF-kappa-B-mediated gene expression. Binds to TNFRSF5/CD40 and TNFRSF11A/RANK. Associates with NGFR, TNFRSF17, IRAK2, IRAK3, RIPK2, MAP3K1, MAP3K5, MAP3K14, CSK, TRAF, TRAF-interacting protein TRIP and TNF receptor associated protein TDP2. Interacts with IL17R. Interacts with SQSTM1 bridging NTRK1 and NGFR. Forms a ternary complex with SQSTM1 and PRKCZ (By similarity). Interacts with PELI2 and PELI3. Binds UBE2V1. Interacts with TAX1BP1; this interaction mediates deubiquitination of TRAF6 and inhibition of NF-kappa-B activation (By similarity). Interacts with ZNF675. Interacts with ARRB1 and ARRB2. Interacts with MAP3K7 and TAB1/MAP3K7IP1; during IL-1 signaling. Interacts with UBE2N. Interacts with TGFBR1, HDAC1 and RANGAP1. Interacts with AKT1, AKT2 and AKT3. Interacts (via TRAF domains) with NUMBL (via C-terminal). Interacts with RBCK1. Interacts with LIMD1 (via LIM domains) (By similarity). Interacts with RSAD2/viperin (By similarity). Interacts (via C-terminus) with EIF2AK2/PKR (via the kinase catalytic domain) (By similarity). Interacts with ZFAND5. Interacts with IL1RL1. Interacts with TRAFD1. Interacts with AJUBA. Interacts with MAVS/IPS1. Interacts (via TRAF domains) with DYNC2I2 (via WD domains). Interacts with IFIT3 (via N-terminus). Interacts with TICAM2. Interacts with CARD14. Interacts with CD40 and MAP3K8; the interaction is required for ERK activation (By similarity). Interacts with TICAM1 and this interaction is enhanced in the presence of WDFY1. Interacts with TANK; this interaction increases in response to DNA damage. Interacts with USP10; this interaction increases in response to DNA damage. Interacts with ZC3H12A; this interaction increases in response to DNA damage and is stimulated by TANK (By similarity). Interacts with WDFY3 (By similarity). Interacts with TRIM13 (By similarity). Interacts with GPS2 (By similarity). Interacts (via C-terminus) with SASH1. Interacts with LRRC19. Interacts with IL17RA and TRAF3IP2. Interacts with TOMM70. Interacts with AMBRA1; interaction is required to mediate 'Lys-63'-linked ubiquitination of ULK1 (By similarity). Interacts with CRBN; this interaction inhibits TLR4-mediated signaling by preventing TRAF6-mediated ubiquitination of ECSIT (By similarity).</text>
</comment>
<comment type="subcellular location">
    <subcellularLocation>
        <location evidence="3">Cytoplasm</location>
    </subcellularLocation>
    <subcellularLocation>
        <location evidence="3">Cytoplasm</location>
        <location evidence="3">Cell cortex</location>
    </subcellularLocation>
    <subcellularLocation>
        <location evidence="3">Nucleus</location>
    </subcellularLocation>
    <subcellularLocation>
        <location evidence="2">Lipid droplet</location>
    </subcellularLocation>
    <text evidence="2">RSAD2/viperin recruits it to the lipid droplet.</text>
</comment>
<comment type="domain">
    <text evidence="3">The coiled coil domain mediates homo- and hetero-oligomerization.</text>
</comment>
<comment type="domain">
    <text evidence="3">The MATH/TRAF domain binds to receptor cytoplasmic domains.</text>
</comment>
<comment type="PTM">
    <text evidence="3">Sumoylated on Lys-124, Lys-142 and Lys-453 with SUMO1.</text>
</comment>
<comment type="PTM">
    <text evidence="2 3">Polyubiquitinated on Lys-124 by TRAF3IP2; after cell stimulation with IL17A (By similarity). Polyubiquitinated; after cell stimulation with IL1B or TGFB. This ligand-induced cell stimulation leads to dimerization/oligomerization of TRAF6 molecules, followed by auto-ubiquitination which involves UBE2N and UBE2V1 and leads to TRAF6 activation. This 'Lys-63' site-specific poly-ubiquitination appears to be associated with the activation of signaling molecules. Endogenous autoubiquitination occurs only for the cytoplasmic form. Deubiquitinated by USP10 in a TANK-dependent manner, leading to the negative regulation of NF-kappa-B signaling upon DNA damage. LRRC19 induces 'Lys-63' ubiquitination (By similarity). Ubiquitinated at Lys-319 by the SCF(FBXL2) complex, leading to its degradation by the proteasome (By similarity).</text>
</comment>
<comment type="similarity">
    <text evidence="8">Belongs to the TNF receptor-associated factor family. A subfamily.</text>
</comment>
<evidence type="ECO:0000250" key="1"/>
<evidence type="ECO:0000250" key="2">
    <source>
        <dbReference type="UniProtKB" id="P70196"/>
    </source>
</evidence>
<evidence type="ECO:0000250" key="3">
    <source>
        <dbReference type="UniProtKB" id="Q9Y4K3"/>
    </source>
</evidence>
<evidence type="ECO:0000255" key="4"/>
<evidence type="ECO:0000255" key="5">
    <source>
        <dbReference type="PROSITE-ProRule" id="PRU00129"/>
    </source>
</evidence>
<evidence type="ECO:0000255" key="6">
    <source>
        <dbReference type="PROSITE-ProRule" id="PRU00175"/>
    </source>
</evidence>
<evidence type="ECO:0000255" key="7">
    <source>
        <dbReference type="PROSITE-ProRule" id="PRU00207"/>
    </source>
</evidence>
<evidence type="ECO:0000305" key="8"/>